<feature type="chain" id="PRO_0000090751" description="Phosphatidate cytidylyltransferase">
    <location>
        <begin position="1"/>
        <end position="260"/>
    </location>
</feature>
<feature type="transmembrane region" description="Helical" evidence="2">
    <location>
        <begin position="9"/>
        <end position="29"/>
    </location>
</feature>
<feature type="transmembrane region" description="Helical" evidence="2">
    <location>
        <begin position="46"/>
        <end position="66"/>
    </location>
</feature>
<feature type="transmembrane region" description="Helical" evidence="2">
    <location>
        <begin position="70"/>
        <end position="90"/>
    </location>
</feature>
<feature type="transmembrane region" description="Helical" evidence="2">
    <location>
        <begin position="102"/>
        <end position="122"/>
    </location>
</feature>
<feature type="transmembrane region" description="Helical" evidence="2">
    <location>
        <begin position="130"/>
        <end position="150"/>
    </location>
</feature>
<feature type="transmembrane region" description="Helical" evidence="2">
    <location>
        <begin position="172"/>
        <end position="192"/>
    </location>
</feature>
<feature type="transmembrane region" description="Helical" evidence="2">
    <location>
        <begin position="196"/>
        <end position="216"/>
    </location>
</feature>
<keyword id="KW-1003">Cell membrane</keyword>
<keyword id="KW-0444">Lipid biosynthesis</keyword>
<keyword id="KW-0443">Lipid metabolism</keyword>
<keyword id="KW-0472">Membrane</keyword>
<keyword id="KW-0548">Nucleotidyltransferase</keyword>
<keyword id="KW-0594">Phospholipid biosynthesis</keyword>
<keyword id="KW-1208">Phospholipid metabolism</keyword>
<keyword id="KW-0808">Transferase</keyword>
<keyword id="KW-0812">Transmembrane</keyword>
<keyword id="KW-1133">Transmembrane helix</keyword>
<comment type="catalytic activity">
    <reaction>
        <text>a 1,2-diacyl-sn-glycero-3-phosphate + CTP + H(+) = a CDP-1,2-diacyl-sn-glycerol + diphosphate</text>
        <dbReference type="Rhea" id="RHEA:16229"/>
        <dbReference type="ChEBI" id="CHEBI:15378"/>
        <dbReference type="ChEBI" id="CHEBI:33019"/>
        <dbReference type="ChEBI" id="CHEBI:37563"/>
        <dbReference type="ChEBI" id="CHEBI:58332"/>
        <dbReference type="ChEBI" id="CHEBI:58608"/>
        <dbReference type="EC" id="2.7.7.41"/>
    </reaction>
</comment>
<comment type="pathway">
    <text>Phospholipid metabolism; CDP-diacylglycerol biosynthesis; CDP-diacylglycerol from sn-glycerol 3-phosphate: step 3/3.</text>
</comment>
<comment type="subcellular location">
    <subcellularLocation>
        <location evidence="1">Cell membrane</location>
        <topology evidence="1">Multi-pass membrane protein</topology>
    </subcellularLocation>
</comment>
<comment type="similarity">
    <text evidence="3">Belongs to the CDS family.</text>
</comment>
<organism>
    <name type="scientific">Staphylococcus aureus (strain MSSA476)</name>
    <dbReference type="NCBI Taxonomy" id="282459"/>
    <lineage>
        <taxon>Bacteria</taxon>
        <taxon>Bacillati</taxon>
        <taxon>Bacillota</taxon>
        <taxon>Bacilli</taxon>
        <taxon>Bacillales</taxon>
        <taxon>Staphylococcaceae</taxon>
        <taxon>Staphylococcus</taxon>
    </lineage>
</organism>
<name>CDSA_STAAS</name>
<reference key="1">
    <citation type="journal article" date="2004" name="Proc. Natl. Acad. Sci. U.S.A.">
        <title>Complete genomes of two clinical Staphylococcus aureus strains: evidence for the rapid evolution of virulence and drug resistance.</title>
        <authorList>
            <person name="Holden M.T.G."/>
            <person name="Feil E.J."/>
            <person name="Lindsay J.A."/>
            <person name="Peacock S.J."/>
            <person name="Day N.P.J."/>
            <person name="Enright M.C."/>
            <person name="Foster T.J."/>
            <person name="Moore C.E."/>
            <person name="Hurst L."/>
            <person name="Atkin R."/>
            <person name="Barron A."/>
            <person name="Bason N."/>
            <person name="Bentley S.D."/>
            <person name="Chillingworth C."/>
            <person name="Chillingworth T."/>
            <person name="Churcher C."/>
            <person name="Clark L."/>
            <person name="Corton C."/>
            <person name="Cronin A."/>
            <person name="Doggett J."/>
            <person name="Dowd L."/>
            <person name="Feltwell T."/>
            <person name="Hance Z."/>
            <person name="Harris B."/>
            <person name="Hauser H."/>
            <person name="Holroyd S."/>
            <person name="Jagels K."/>
            <person name="James K.D."/>
            <person name="Lennard N."/>
            <person name="Line A."/>
            <person name="Mayes R."/>
            <person name="Moule S."/>
            <person name="Mungall K."/>
            <person name="Ormond D."/>
            <person name="Quail M.A."/>
            <person name="Rabbinowitsch E."/>
            <person name="Rutherford K.M."/>
            <person name="Sanders M."/>
            <person name="Sharp S."/>
            <person name="Simmonds M."/>
            <person name="Stevens K."/>
            <person name="Whitehead S."/>
            <person name="Barrell B.G."/>
            <person name="Spratt B.G."/>
            <person name="Parkhill J."/>
        </authorList>
    </citation>
    <scope>NUCLEOTIDE SEQUENCE [LARGE SCALE GENOMIC DNA]</scope>
    <source>
        <strain>MSSA476</strain>
    </source>
</reference>
<accession>Q6G9V2</accession>
<protein>
    <recommendedName>
        <fullName>Phosphatidate cytidylyltransferase</fullName>
        <ecNumber>2.7.7.41</ecNumber>
    </recommendedName>
    <alternativeName>
        <fullName>CDP-DAG synthase</fullName>
    </alternativeName>
    <alternativeName>
        <fullName>CDP-DG synthase</fullName>
    </alternativeName>
    <alternativeName>
        <fullName>CDP-diacylglycerol synthase</fullName>
        <shortName>CDS</shortName>
    </alternativeName>
    <alternativeName>
        <fullName>CDP-diglyceride pyrophosphorylase</fullName>
    </alternativeName>
    <alternativeName>
        <fullName>CDP-diglyceride synthase</fullName>
    </alternativeName>
    <alternativeName>
        <fullName>CTP:phosphatidate cytidylyltransferase</fullName>
    </alternativeName>
</protein>
<gene>
    <name type="primary">cdsA</name>
    <name type="ordered locus">SAS1195</name>
</gene>
<sequence length="260" mass="28964">MKVRTLTAIIALIVFLPILLKGGLVLMIFANILALIALKELLNMNMIKFVSVPGLISAVGLIIIMLPQHAGPWVQVIQLKSLIAMSFIVLSYTVLSKNRFSFMDAAFCLMSVAYVGIGFMFFYETRSEGLHYILYAFLIVWLTDTGAYLFGKMMGKHKLWPVISPNKTIEGFIGGLFCSLIVPLAMLYFVDFNMNVWILLGVTLILSLFGQLGDLVESGFKRHFGVKDSGRILPGHGGILDRFDSFMFVLPLLNILLIQS</sequence>
<evidence type="ECO:0000250" key="1"/>
<evidence type="ECO:0000255" key="2"/>
<evidence type="ECO:0000305" key="3"/>
<proteinExistence type="inferred from homology"/>
<dbReference type="EC" id="2.7.7.41"/>
<dbReference type="EMBL" id="BX571857">
    <property type="protein sequence ID" value="CAG42972.1"/>
    <property type="molecule type" value="Genomic_DNA"/>
</dbReference>
<dbReference type="RefSeq" id="WP_000868413.1">
    <property type="nucleotide sequence ID" value="NC_002953.3"/>
</dbReference>
<dbReference type="SMR" id="Q6G9V2"/>
<dbReference type="KEGG" id="sas:SAS1195"/>
<dbReference type="HOGENOM" id="CLU_037294_2_2_9"/>
<dbReference type="UniPathway" id="UPA00557">
    <property type="reaction ID" value="UER00614"/>
</dbReference>
<dbReference type="GO" id="GO:0005886">
    <property type="term" value="C:plasma membrane"/>
    <property type="evidence" value="ECO:0007669"/>
    <property type="project" value="UniProtKB-SubCell"/>
</dbReference>
<dbReference type="GO" id="GO:0004605">
    <property type="term" value="F:phosphatidate cytidylyltransferase activity"/>
    <property type="evidence" value="ECO:0007669"/>
    <property type="project" value="UniProtKB-EC"/>
</dbReference>
<dbReference type="GO" id="GO:0016024">
    <property type="term" value="P:CDP-diacylglycerol biosynthetic process"/>
    <property type="evidence" value="ECO:0007669"/>
    <property type="project" value="UniProtKB-UniPathway"/>
</dbReference>
<dbReference type="InterPro" id="IPR000374">
    <property type="entry name" value="PC_trans"/>
</dbReference>
<dbReference type="PANTHER" id="PTHR46382">
    <property type="entry name" value="PHOSPHATIDATE CYTIDYLYLTRANSFERASE"/>
    <property type="match status" value="1"/>
</dbReference>
<dbReference type="PANTHER" id="PTHR46382:SF1">
    <property type="entry name" value="PHOSPHATIDATE CYTIDYLYLTRANSFERASE"/>
    <property type="match status" value="1"/>
</dbReference>
<dbReference type="Pfam" id="PF01148">
    <property type="entry name" value="CTP_transf_1"/>
    <property type="match status" value="1"/>
</dbReference>
<dbReference type="PROSITE" id="PS01315">
    <property type="entry name" value="CDS"/>
    <property type="match status" value="1"/>
</dbReference>